<comment type="function">
    <text evidence="1">Catalyzes the NAD(+)-dependent oxidation of L-threonine to 2-amino-3-ketobutyrate.</text>
</comment>
<comment type="catalytic activity">
    <reaction evidence="1">
        <text>L-threonine + NAD(+) = (2S)-2-amino-3-oxobutanoate + NADH + H(+)</text>
        <dbReference type="Rhea" id="RHEA:13161"/>
        <dbReference type="ChEBI" id="CHEBI:15378"/>
        <dbReference type="ChEBI" id="CHEBI:57540"/>
        <dbReference type="ChEBI" id="CHEBI:57926"/>
        <dbReference type="ChEBI" id="CHEBI:57945"/>
        <dbReference type="ChEBI" id="CHEBI:78948"/>
        <dbReference type="EC" id="1.1.1.103"/>
    </reaction>
</comment>
<comment type="cofactor">
    <cofactor evidence="1">
        <name>Zn(2+)</name>
        <dbReference type="ChEBI" id="CHEBI:29105"/>
    </cofactor>
    <text evidence="1">Binds 2 Zn(2+) ions per subunit.</text>
</comment>
<comment type="pathway">
    <text evidence="1">Amino-acid degradation; L-threonine degradation via oxydo-reductase pathway; glycine from L-threonine: step 1/2.</text>
</comment>
<comment type="subunit">
    <text evidence="1">Homotetramer.</text>
</comment>
<comment type="subcellular location">
    <subcellularLocation>
        <location evidence="1">Cytoplasm</location>
    </subcellularLocation>
</comment>
<comment type="similarity">
    <text evidence="1">Belongs to the zinc-containing alcohol dehydrogenase family.</text>
</comment>
<accession>Q48AM4</accession>
<dbReference type="EC" id="1.1.1.103" evidence="1"/>
<dbReference type="EMBL" id="CP000083">
    <property type="protein sequence ID" value="AAZ28577.1"/>
    <property type="molecule type" value="Genomic_DNA"/>
</dbReference>
<dbReference type="RefSeq" id="WP_011040996.1">
    <property type="nucleotide sequence ID" value="NC_003910.7"/>
</dbReference>
<dbReference type="SMR" id="Q48AM4"/>
<dbReference type="STRING" id="167879.CPS_0121"/>
<dbReference type="KEGG" id="cps:CPS_0121"/>
<dbReference type="eggNOG" id="COG1063">
    <property type="taxonomic scope" value="Bacteria"/>
</dbReference>
<dbReference type="HOGENOM" id="CLU_026673_11_0_6"/>
<dbReference type="UniPathway" id="UPA00046">
    <property type="reaction ID" value="UER00505"/>
</dbReference>
<dbReference type="Proteomes" id="UP000000547">
    <property type="component" value="Chromosome"/>
</dbReference>
<dbReference type="GO" id="GO:0005737">
    <property type="term" value="C:cytoplasm"/>
    <property type="evidence" value="ECO:0007669"/>
    <property type="project" value="UniProtKB-SubCell"/>
</dbReference>
<dbReference type="GO" id="GO:0008743">
    <property type="term" value="F:L-threonine 3-dehydrogenase activity"/>
    <property type="evidence" value="ECO:0007669"/>
    <property type="project" value="UniProtKB-UniRule"/>
</dbReference>
<dbReference type="GO" id="GO:0008270">
    <property type="term" value="F:zinc ion binding"/>
    <property type="evidence" value="ECO:0007669"/>
    <property type="project" value="UniProtKB-UniRule"/>
</dbReference>
<dbReference type="GO" id="GO:0019518">
    <property type="term" value="P:L-threonine catabolic process to glycine"/>
    <property type="evidence" value="ECO:0007669"/>
    <property type="project" value="UniProtKB-UniPathway"/>
</dbReference>
<dbReference type="Gene3D" id="3.90.180.10">
    <property type="entry name" value="Medium-chain alcohol dehydrogenases, catalytic domain"/>
    <property type="match status" value="1"/>
</dbReference>
<dbReference type="Gene3D" id="3.40.50.720">
    <property type="entry name" value="NAD(P)-binding Rossmann-like Domain"/>
    <property type="match status" value="1"/>
</dbReference>
<dbReference type="HAMAP" id="MF_00627">
    <property type="entry name" value="Thr_dehydrog"/>
    <property type="match status" value="1"/>
</dbReference>
<dbReference type="InterPro" id="IPR013149">
    <property type="entry name" value="ADH-like_C"/>
</dbReference>
<dbReference type="InterPro" id="IPR013154">
    <property type="entry name" value="ADH-like_N"/>
</dbReference>
<dbReference type="InterPro" id="IPR002328">
    <property type="entry name" value="ADH_Zn_CS"/>
</dbReference>
<dbReference type="InterPro" id="IPR011032">
    <property type="entry name" value="GroES-like_sf"/>
</dbReference>
<dbReference type="InterPro" id="IPR004627">
    <property type="entry name" value="L-Threonine_3-DHase"/>
</dbReference>
<dbReference type="InterPro" id="IPR036291">
    <property type="entry name" value="NAD(P)-bd_dom_sf"/>
</dbReference>
<dbReference type="InterPro" id="IPR020843">
    <property type="entry name" value="PKS_ER"/>
</dbReference>
<dbReference type="InterPro" id="IPR050129">
    <property type="entry name" value="Zn_alcohol_dh"/>
</dbReference>
<dbReference type="NCBIfam" id="NF003808">
    <property type="entry name" value="PRK05396.1"/>
    <property type="match status" value="1"/>
</dbReference>
<dbReference type="NCBIfam" id="TIGR00692">
    <property type="entry name" value="tdh"/>
    <property type="match status" value="1"/>
</dbReference>
<dbReference type="PANTHER" id="PTHR43401">
    <property type="entry name" value="L-THREONINE 3-DEHYDROGENASE"/>
    <property type="match status" value="1"/>
</dbReference>
<dbReference type="PANTHER" id="PTHR43401:SF2">
    <property type="entry name" value="L-THREONINE 3-DEHYDROGENASE"/>
    <property type="match status" value="1"/>
</dbReference>
<dbReference type="Pfam" id="PF08240">
    <property type="entry name" value="ADH_N"/>
    <property type="match status" value="1"/>
</dbReference>
<dbReference type="Pfam" id="PF00107">
    <property type="entry name" value="ADH_zinc_N"/>
    <property type="match status" value="1"/>
</dbReference>
<dbReference type="SMART" id="SM00829">
    <property type="entry name" value="PKS_ER"/>
    <property type="match status" value="1"/>
</dbReference>
<dbReference type="SUPFAM" id="SSF50129">
    <property type="entry name" value="GroES-like"/>
    <property type="match status" value="1"/>
</dbReference>
<dbReference type="SUPFAM" id="SSF51735">
    <property type="entry name" value="NAD(P)-binding Rossmann-fold domains"/>
    <property type="match status" value="1"/>
</dbReference>
<dbReference type="PROSITE" id="PS00059">
    <property type="entry name" value="ADH_ZINC"/>
    <property type="match status" value="1"/>
</dbReference>
<reference key="1">
    <citation type="journal article" date="2005" name="Proc. Natl. Acad. Sci. U.S.A.">
        <title>The psychrophilic lifestyle as revealed by the genome sequence of Colwellia psychrerythraea 34H through genomic and proteomic analyses.</title>
        <authorList>
            <person name="Methe B.A."/>
            <person name="Nelson K.E."/>
            <person name="Deming J.W."/>
            <person name="Momen B."/>
            <person name="Melamud E."/>
            <person name="Zhang X."/>
            <person name="Moult J."/>
            <person name="Madupu R."/>
            <person name="Nelson W.C."/>
            <person name="Dodson R.J."/>
            <person name="Brinkac L.M."/>
            <person name="Daugherty S.C."/>
            <person name="Durkin A.S."/>
            <person name="DeBoy R.T."/>
            <person name="Kolonay J.F."/>
            <person name="Sullivan S.A."/>
            <person name="Zhou L."/>
            <person name="Davidsen T.M."/>
            <person name="Wu M."/>
            <person name="Huston A.L."/>
            <person name="Lewis M."/>
            <person name="Weaver B."/>
            <person name="Weidman J.F."/>
            <person name="Khouri H."/>
            <person name="Utterback T.R."/>
            <person name="Feldblyum T.V."/>
            <person name="Fraser C.M."/>
        </authorList>
    </citation>
    <scope>NUCLEOTIDE SEQUENCE [LARGE SCALE GENOMIC DNA]</scope>
    <source>
        <strain>34H / ATCC BAA-681</strain>
    </source>
</reference>
<organism>
    <name type="scientific">Colwellia psychrerythraea (strain 34H / ATCC BAA-681)</name>
    <name type="common">Vibrio psychroerythus</name>
    <dbReference type="NCBI Taxonomy" id="167879"/>
    <lineage>
        <taxon>Bacteria</taxon>
        <taxon>Pseudomonadati</taxon>
        <taxon>Pseudomonadota</taxon>
        <taxon>Gammaproteobacteria</taxon>
        <taxon>Alteromonadales</taxon>
        <taxon>Colwelliaceae</taxon>
        <taxon>Colwellia</taxon>
    </lineage>
</organism>
<keyword id="KW-0963">Cytoplasm</keyword>
<keyword id="KW-0479">Metal-binding</keyword>
<keyword id="KW-0520">NAD</keyword>
<keyword id="KW-0560">Oxidoreductase</keyword>
<keyword id="KW-0862">Zinc</keyword>
<protein>
    <recommendedName>
        <fullName evidence="1">L-threonine 3-dehydrogenase</fullName>
        <shortName evidence="1">TDH</shortName>
        <ecNumber evidence="1">1.1.1.103</ecNumber>
    </recommendedName>
</protein>
<proteinExistence type="inferred from homology"/>
<feature type="chain" id="PRO_1000051631" description="L-threonine 3-dehydrogenase">
    <location>
        <begin position="1"/>
        <end position="341"/>
    </location>
</feature>
<feature type="active site" description="Charge relay system" evidence="1">
    <location>
        <position position="40"/>
    </location>
</feature>
<feature type="active site" description="Charge relay system" evidence="1">
    <location>
        <position position="43"/>
    </location>
</feature>
<feature type="binding site" evidence="1">
    <location>
        <position position="38"/>
    </location>
    <ligand>
        <name>Zn(2+)</name>
        <dbReference type="ChEBI" id="CHEBI:29105"/>
        <label>1</label>
        <note>catalytic</note>
    </ligand>
</feature>
<feature type="binding site" evidence="1">
    <location>
        <position position="63"/>
    </location>
    <ligand>
        <name>Zn(2+)</name>
        <dbReference type="ChEBI" id="CHEBI:29105"/>
        <label>1</label>
        <note>catalytic</note>
    </ligand>
</feature>
<feature type="binding site" evidence="1">
    <location>
        <position position="64"/>
    </location>
    <ligand>
        <name>Zn(2+)</name>
        <dbReference type="ChEBI" id="CHEBI:29105"/>
        <label>1</label>
        <note>catalytic</note>
    </ligand>
</feature>
<feature type="binding site" evidence="1">
    <location>
        <position position="93"/>
    </location>
    <ligand>
        <name>Zn(2+)</name>
        <dbReference type="ChEBI" id="CHEBI:29105"/>
        <label>2</label>
    </ligand>
</feature>
<feature type="binding site" evidence="1">
    <location>
        <position position="96"/>
    </location>
    <ligand>
        <name>Zn(2+)</name>
        <dbReference type="ChEBI" id="CHEBI:29105"/>
        <label>2</label>
    </ligand>
</feature>
<feature type="binding site" evidence="1">
    <location>
        <position position="99"/>
    </location>
    <ligand>
        <name>Zn(2+)</name>
        <dbReference type="ChEBI" id="CHEBI:29105"/>
        <label>2</label>
    </ligand>
</feature>
<feature type="binding site" evidence="1">
    <location>
        <position position="107"/>
    </location>
    <ligand>
        <name>Zn(2+)</name>
        <dbReference type="ChEBI" id="CHEBI:29105"/>
        <label>2</label>
    </ligand>
</feature>
<feature type="binding site" evidence="1">
    <location>
        <position position="175"/>
    </location>
    <ligand>
        <name>NAD(+)</name>
        <dbReference type="ChEBI" id="CHEBI:57540"/>
    </ligand>
</feature>
<feature type="binding site" evidence="1">
    <location>
        <position position="195"/>
    </location>
    <ligand>
        <name>NAD(+)</name>
        <dbReference type="ChEBI" id="CHEBI:57540"/>
    </ligand>
</feature>
<feature type="binding site" evidence="1">
    <location>
        <position position="200"/>
    </location>
    <ligand>
        <name>NAD(+)</name>
        <dbReference type="ChEBI" id="CHEBI:57540"/>
    </ligand>
</feature>
<feature type="binding site" evidence="1">
    <location>
        <begin position="262"/>
        <end position="264"/>
    </location>
    <ligand>
        <name>NAD(+)</name>
        <dbReference type="ChEBI" id="CHEBI:57540"/>
    </ligand>
</feature>
<feature type="binding site" evidence="1">
    <location>
        <begin position="286"/>
        <end position="287"/>
    </location>
    <ligand>
        <name>NAD(+)</name>
        <dbReference type="ChEBI" id="CHEBI:57540"/>
    </ligand>
</feature>
<feature type="site" description="Important for catalytic activity for the proton relay mechanism but does not participate directly in the coordination of zinc atom" evidence="1">
    <location>
        <position position="148"/>
    </location>
</feature>
<name>TDH_COLP3</name>
<sequence>MKSLAKLKAEPGIWLTRTEKPKLGHNDLLIKIKKTAICGTDIHIYNWDEWAQKTVPTPMVVGHEYAGEVVGIGQEVKGFTLGDRVSGEGHITCGHCRNCRGGRTHLCRNTVGVGVNRAGSFAEYLVIPAYNAFKLPDEISDDLASIFDPFGNAVHTALSFDLVGEDVLITGAGPIGIMAAAVAKHVGARHVVITDINEYRLDLARKMGATRAVDVSKESLKDVMTDLGMTEGFDVGMEMSGVPMAFTSMLESMNNGGKIAMLGIPGSDMAIDWSQVIFKGLTIKGIYGREMFETWYKMASLIQSGLDLTPIITHHYNIDDFQQGFDMMRSGQSGKVILDWT</sequence>
<gene>
    <name evidence="1" type="primary">tdh</name>
    <name type="ordered locus">CPS_0121</name>
</gene>
<evidence type="ECO:0000255" key="1">
    <source>
        <dbReference type="HAMAP-Rule" id="MF_00627"/>
    </source>
</evidence>